<sequence>MFLGTHPVRLDDKNRFVLPAKFRGMLDSVVLTRGQERCLYLFDRSEFERISDGIRNTALSQKKVRDYLRIFLSGAAAQLPDRQHRIVIANHLRAYADLKKEVTVIGAGKHIEIWDSEAWSSYLEEQEAAFSEIAEEVIPGLI</sequence>
<comment type="subunit">
    <text evidence="1">Forms oligomers.</text>
</comment>
<comment type="subcellular location">
    <subcellularLocation>
        <location evidence="1">Cytoplasm</location>
        <location evidence="1">Nucleoid</location>
    </subcellularLocation>
</comment>
<comment type="similarity">
    <text evidence="1">Belongs to the MraZ family.</text>
</comment>
<evidence type="ECO:0000255" key="1">
    <source>
        <dbReference type="HAMAP-Rule" id="MF_01008"/>
    </source>
</evidence>
<evidence type="ECO:0000255" key="2">
    <source>
        <dbReference type="PROSITE-ProRule" id="PRU01076"/>
    </source>
</evidence>
<keyword id="KW-0963">Cytoplasm</keyword>
<keyword id="KW-0238">DNA-binding</keyword>
<keyword id="KW-0677">Repeat</keyword>
<keyword id="KW-0804">Transcription</keyword>
<keyword id="KW-0805">Transcription regulation</keyword>
<feature type="chain" id="PRO_0000108553" description="Transcriptional regulator MraZ">
    <location>
        <begin position="1"/>
        <end position="142"/>
    </location>
</feature>
<feature type="domain" description="SpoVT-AbrB 1" evidence="2">
    <location>
        <begin position="5"/>
        <end position="46"/>
    </location>
</feature>
<feature type="domain" description="SpoVT-AbrB 2" evidence="2">
    <location>
        <begin position="75"/>
        <end position="118"/>
    </location>
</feature>
<protein>
    <recommendedName>
        <fullName>Transcriptional regulator MraZ</fullName>
    </recommendedName>
</protein>
<organism>
    <name type="scientific">Tropheryma whipplei (strain TW08/27)</name>
    <name type="common">Whipple's bacillus</name>
    <dbReference type="NCBI Taxonomy" id="218496"/>
    <lineage>
        <taxon>Bacteria</taxon>
        <taxon>Bacillati</taxon>
        <taxon>Actinomycetota</taxon>
        <taxon>Actinomycetes</taxon>
        <taxon>Micrococcales</taxon>
        <taxon>Tropherymataceae</taxon>
        <taxon>Tropheryma</taxon>
    </lineage>
</organism>
<dbReference type="EMBL" id="BX251411">
    <property type="protein sequence ID" value="CAD67217.1"/>
    <property type="molecule type" value="Genomic_DNA"/>
</dbReference>
<dbReference type="RefSeq" id="WP_011096497.1">
    <property type="nucleotide sequence ID" value="NC_004551.1"/>
</dbReference>
<dbReference type="SMR" id="Q83HJ5"/>
<dbReference type="GeneID" id="67388330"/>
<dbReference type="KEGG" id="tws:TW551"/>
<dbReference type="HOGENOM" id="CLU_107907_0_2_11"/>
<dbReference type="GO" id="GO:0005737">
    <property type="term" value="C:cytoplasm"/>
    <property type="evidence" value="ECO:0007669"/>
    <property type="project" value="UniProtKB-UniRule"/>
</dbReference>
<dbReference type="GO" id="GO:0009295">
    <property type="term" value="C:nucleoid"/>
    <property type="evidence" value="ECO:0007669"/>
    <property type="project" value="UniProtKB-SubCell"/>
</dbReference>
<dbReference type="GO" id="GO:0003700">
    <property type="term" value="F:DNA-binding transcription factor activity"/>
    <property type="evidence" value="ECO:0007669"/>
    <property type="project" value="UniProtKB-UniRule"/>
</dbReference>
<dbReference type="GO" id="GO:0000976">
    <property type="term" value="F:transcription cis-regulatory region binding"/>
    <property type="evidence" value="ECO:0007669"/>
    <property type="project" value="TreeGrafter"/>
</dbReference>
<dbReference type="GO" id="GO:2000143">
    <property type="term" value="P:negative regulation of DNA-templated transcription initiation"/>
    <property type="evidence" value="ECO:0007669"/>
    <property type="project" value="TreeGrafter"/>
</dbReference>
<dbReference type="CDD" id="cd16321">
    <property type="entry name" value="MraZ_C"/>
    <property type="match status" value="1"/>
</dbReference>
<dbReference type="CDD" id="cd16320">
    <property type="entry name" value="MraZ_N"/>
    <property type="match status" value="1"/>
</dbReference>
<dbReference type="Gene3D" id="3.40.1550.20">
    <property type="entry name" value="Transcriptional regulator MraZ domain"/>
    <property type="match status" value="1"/>
</dbReference>
<dbReference type="HAMAP" id="MF_01008">
    <property type="entry name" value="MraZ"/>
    <property type="match status" value="1"/>
</dbReference>
<dbReference type="InterPro" id="IPR003444">
    <property type="entry name" value="MraZ"/>
</dbReference>
<dbReference type="InterPro" id="IPR035644">
    <property type="entry name" value="MraZ_C"/>
</dbReference>
<dbReference type="InterPro" id="IPR020603">
    <property type="entry name" value="MraZ_dom"/>
</dbReference>
<dbReference type="InterPro" id="IPR035642">
    <property type="entry name" value="MraZ_N"/>
</dbReference>
<dbReference type="InterPro" id="IPR038619">
    <property type="entry name" value="MraZ_sf"/>
</dbReference>
<dbReference type="InterPro" id="IPR007159">
    <property type="entry name" value="SpoVT-AbrB_dom"/>
</dbReference>
<dbReference type="InterPro" id="IPR037914">
    <property type="entry name" value="SpoVT-AbrB_sf"/>
</dbReference>
<dbReference type="NCBIfam" id="TIGR00242">
    <property type="entry name" value="division/cell wall cluster transcriptional repressor MraZ"/>
    <property type="match status" value="1"/>
</dbReference>
<dbReference type="PANTHER" id="PTHR34701">
    <property type="entry name" value="TRANSCRIPTIONAL REGULATOR MRAZ"/>
    <property type="match status" value="1"/>
</dbReference>
<dbReference type="PANTHER" id="PTHR34701:SF1">
    <property type="entry name" value="TRANSCRIPTIONAL REGULATOR MRAZ"/>
    <property type="match status" value="1"/>
</dbReference>
<dbReference type="Pfam" id="PF02381">
    <property type="entry name" value="MraZ"/>
    <property type="match status" value="2"/>
</dbReference>
<dbReference type="SUPFAM" id="SSF89447">
    <property type="entry name" value="AbrB/MazE/MraZ-like"/>
    <property type="match status" value="1"/>
</dbReference>
<dbReference type="PROSITE" id="PS51740">
    <property type="entry name" value="SPOVT_ABRB"/>
    <property type="match status" value="2"/>
</dbReference>
<name>MRAZ_TROW8</name>
<accession>Q83HJ5</accession>
<reference key="1">
    <citation type="journal article" date="2003" name="Lancet">
        <title>Sequencing and analysis of the genome of the Whipple's disease bacterium Tropheryma whipplei.</title>
        <authorList>
            <person name="Bentley S.D."/>
            <person name="Maiwald M."/>
            <person name="Murphy L.D."/>
            <person name="Pallen M.J."/>
            <person name="Yeats C.A."/>
            <person name="Dover L.G."/>
            <person name="Norbertczak H.T."/>
            <person name="Besra G.S."/>
            <person name="Quail M.A."/>
            <person name="Harris D.E."/>
            <person name="von Herbay A."/>
            <person name="Goble A."/>
            <person name="Rutter S."/>
            <person name="Squares R."/>
            <person name="Squares S."/>
            <person name="Barrell B.G."/>
            <person name="Parkhill J."/>
            <person name="Relman D.A."/>
        </authorList>
    </citation>
    <scope>NUCLEOTIDE SEQUENCE [LARGE SCALE GENOMIC DNA]</scope>
    <source>
        <strain>TW08/27</strain>
    </source>
</reference>
<proteinExistence type="inferred from homology"/>
<gene>
    <name evidence="1" type="primary">mraZ</name>
    <name type="ordered locus">TW551</name>
</gene>